<dbReference type="EC" id="6.1.1.15" evidence="1"/>
<dbReference type="EMBL" id="CP001638">
    <property type="protein sequence ID" value="ACS24009.1"/>
    <property type="molecule type" value="Genomic_DNA"/>
</dbReference>
<dbReference type="SMR" id="C5D9C3"/>
<dbReference type="STRING" id="471223.GWCH70_1149"/>
<dbReference type="KEGG" id="gwc:GWCH70_1149"/>
<dbReference type="eggNOG" id="COG0442">
    <property type="taxonomic scope" value="Bacteria"/>
</dbReference>
<dbReference type="HOGENOM" id="CLU_016739_0_0_9"/>
<dbReference type="OrthoDB" id="9809052at2"/>
<dbReference type="GO" id="GO:0005829">
    <property type="term" value="C:cytosol"/>
    <property type="evidence" value="ECO:0007669"/>
    <property type="project" value="TreeGrafter"/>
</dbReference>
<dbReference type="GO" id="GO:0002161">
    <property type="term" value="F:aminoacyl-tRNA deacylase activity"/>
    <property type="evidence" value="ECO:0007669"/>
    <property type="project" value="InterPro"/>
</dbReference>
<dbReference type="GO" id="GO:0005524">
    <property type="term" value="F:ATP binding"/>
    <property type="evidence" value="ECO:0007669"/>
    <property type="project" value="UniProtKB-UniRule"/>
</dbReference>
<dbReference type="GO" id="GO:0140096">
    <property type="term" value="F:catalytic activity, acting on a protein"/>
    <property type="evidence" value="ECO:0007669"/>
    <property type="project" value="UniProtKB-ARBA"/>
</dbReference>
<dbReference type="GO" id="GO:0004827">
    <property type="term" value="F:proline-tRNA ligase activity"/>
    <property type="evidence" value="ECO:0007669"/>
    <property type="project" value="UniProtKB-UniRule"/>
</dbReference>
<dbReference type="GO" id="GO:0016740">
    <property type="term" value="F:transferase activity"/>
    <property type="evidence" value="ECO:0007669"/>
    <property type="project" value="UniProtKB-ARBA"/>
</dbReference>
<dbReference type="GO" id="GO:0006433">
    <property type="term" value="P:prolyl-tRNA aminoacylation"/>
    <property type="evidence" value="ECO:0007669"/>
    <property type="project" value="UniProtKB-UniRule"/>
</dbReference>
<dbReference type="CDD" id="cd04334">
    <property type="entry name" value="ProRS-INS"/>
    <property type="match status" value="1"/>
</dbReference>
<dbReference type="CDD" id="cd00861">
    <property type="entry name" value="ProRS_anticodon_short"/>
    <property type="match status" value="1"/>
</dbReference>
<dbReference type="CDD" id="cd00779">
    <property type="entry name" value="ProRS_core_prok"/>
    <property type="match status" value="1"/>
</dbReference>
<dbReference type="FunFam" id="3.30.930.10:FF:000043">
    <property type="entry name" value="Proline--tRNA ligase"/>
    <property type="match status" value="1"/>
</dbReference>
<dbReference type="FunFam" id="3.30.930.10:FF:000062">
    <property type="entry name" value="Proline--tRNA ligase"/>
    <property type="match status" value="1"/>
</dbReference>
<dbReference type="FunFam" id="3.40.50.800:FF:000011">
    <property type="entry name" value="Proline--tRNA ligase"/>
    <property type="match status" value="1"/>
</dbReference>
<dbReference type="Gene3D" id="3.40.50.800">
    <property type="entry name" value="Anticodon-binding domain"/>
    <property type="match status" value="1"/>
</dbReference>
<dbReference type="Gene3D" id="3.30.930.10">
    <property type="entry name" value="Bira Bifunctional Protein, Domain 2"/>
    <property type="match status" value="2"/>
</dbReference>
<dbReference type="Gene3D" id="3.90.960.10">
    <property type="entry name" value="YbaK/aminoacyl-tRNA synthetase-associated domain"/>
    <property type="match status" value="1"/>
</dbReference>
<dbReference type="HAMAP" id="MF_01569">
    <property type="entry name" value="Pro_tRNA_synth_type1"/>
    <property type="match status" value="1"/>
</dbReference>
<dbReference type="InterPro" id="IPR002314">
    <property type="entry name" value="aa-tRNA-synt_IIb"/>
</dbReference>
<dbReference type="InterPro" id="IPR006195">
    <property type="entry name" value="aa-tRNA-synth_II"/>
</dbReference>
<dbReference type="InterPro" id="IPR045864">
    <property type="entry name" value="aa-tRNA-synth_II/BPL/LPL"/>
</dbReference>
<dbReference type="InterPro" id="IPR004154">
    <property type="entry name" value="Anticodon-bd"/>
</dbReference>
<dbReference type="InterPro" id="IPR036621">
    <property type="entry name" value="Anticodon-bd_dom_sf"/>
</dbReference>
<dbReference type="InterPro" id="IPR002316">
    <property type="entry name" value="Pro-tRNA-ligase_IIa"/>
</dbReference>
<dbReference type="InterPro" id="IPR004500">
    <property type="entry name" value="Pro-tRNA-synth_IIa_bac-type"/>
</dbReference>
<dbReference type="InterPro" id="IPR023717">
    <property type="entry name" value="Pro-tRNA-Synthase_IIa_type1"/>
</dbReference>
<dbReference type="InterPro" id="IPR050062">
    <property type="entry name" value="Pro-tRNA_synthetase"/>
</dbReference>
<dbReference type="InterPro" id="IPR044140">
    <property type="entry name" value="ProRS_anticodon_short"/>
</dbReference>
<dbReference type="InterPro" id="IPR033730">
    <property type="entry name" value="ProRS_core_prok"/>
</dbReference>
<dbReference type="InterPro" id="IPR036754">
    <property type="entry name" value="YbaK/aa-tRNA-synt-asso_dom_sf"/>
</dbReference>
<dbReference type="InterPro" id="IPR007214">
    <property type="entry name" value="YbaK/aa-tRNA-synth-assoc-dom"/>
</dbReference>
<dbReference type="NCBIfam" id="NF006625">
    <property type="entry name" value="PRK09194.1"/>
    <property type="match status" value="1"/>
</dbReference>
<dbReference type="NCBIfam" id="TIGR00409">
    <property type="entry name" value="proS_fam_II"/>
    <property type="match status" value="1"/>
</dbReference>
<dbReference type="PANTHER" id="PTHR42753">
    <property type="entry name" value="MITOCHONDRIAL RIBOSOME PROTEIN L39/PROLYL-TRNA LIGASE FAMILY MEMBER"/>
    <property type="match status" value="1"/>
</dbReference>
<dbReference type="PANTHER" id="PTHR42753:SF2">
    <property type="entry name" value="PROLINE--TRNA LIGASE"/>
    <property type="match status" value="1"/>
</dbReference>
<dbReference type="Pfam" id="PF03129">
    <property type="entry name" value="HGTP_anticodon"/>
    <property type="match status" value="1"/>
</dbReference>
<dbReference type="Pfam" id="PF00587">
    <property type="entry name" value="tRNA-synt_2b"/>
    <property type="match status" value="1"/>
</dbReference>
<dbReference type="Pfam" id="PF04073">
    <property type="entry name" value="tRNA_edit"/>
    <property type="match status" value="1"/>
</dbReference>
<dbReference type="PIRSF" id="PIRSF001535">
    <property type="entry name" value="ProRS_1"/>
    <property type="match status" value="1"/>
</dbReference>
<dbReference type="PRINTS" id="PR01046">
    <property type="entry name" value="TRNASYNTHPRO"/>
</dbReference>
<dbReference type="SUPFAM" id="SSF52954">
    <property type="entry name" value="Class II aaRS ABD-related"/>
    <property type="match status" value="1"/>
</dbReference>
<dbReference type="SUPFAM" id="SSF55681">
    <property type="entry name" value="Class II aaRS and biotin synthetases"/>
    <property type="match status" value="1"/>
</dbReference>
<dbReference type="SUPFAM" id="SSF55826">
    <property type="entry name" value="YbaK/ProRS associated domain"/>
    <property type="match status" value="1"/>
</dbReference>
<dbReference type="PROSITE" id="PS50862">
    <property type="entry name" value="AA_TRNA_LIGASE_II"/>
    <property type="match status" value="1"/>
</dbReference>
<organism>
    <name type="scientific">Geobacillus sp. (strain WCH70)</name>
    <dbReference type="NCBI Taxonomy" id="471223"/>
    <lineage>
        <taxon>Bacteria</taxon>
        <taxon>Bacillati</taxon>
        <taxon>Bacillota</taxon>
        <taxon>Bacilli</taxon>
        <taxon>Bacillales</taxon>
        <taxon>Anoxybacillaceae</taxon>
        <taxon>Geobacillus</taxon>
    </lineage>
</organism>
<feature type="chain" id="PRO_1000215530" description="Proline--tRNA ligase">
    <location>
        <begin position="1"/>
        <end position="567"/>
    </location>
</feature>
<sequence length="567" mass="63772">MRQSQSFIPTLREVPADAEVKSHQLLLRAGFIRQSASGVYTFLPLGQRVLQKVEAIIREEMNRAGAIELLMPALQPAELWQQSGRWYSYGPELMRLKDRHERDFALGPTHEEIITALVRDEVKTYKRLPLTLYQIQVKFRDEKRPRFGLLRGREFIMKDAYSFHTSQESLDETYNKMYEAYSNIFRRCGLNFRAVIADSGAIGGKDTHEFMVLSEIGEDTIAYSDASDYAANIEMAPVITTYEKSDEPLRKLEKVHTPGQKTIEEVASYLQVTPEKCIKSLLFKVDDRYVLVLVRGDHEANDVKVKNLFDASVVELATPEETKQAMNCEVGSLGPIGVSESVTIVADHAVKAIVNGVCGANEEGYHYIGVNPERDFTISEYADLRFIQEGDPSPDGKGTIRFARGIEVGHVFKLGTRYSKAMNATYLDENGRSQTMIMGCYGIGVSRLVAAIAEQFADENGLVWPASVAPFHVHLISVNAKNEEQRQLADEWYEKLGQAGFEVLYDDRPERAGVKFADSDLIGIPIRVTVGKRANEGIVEIKVRQTGESMEVSVDELIDTIRRLLQQ</sequence>
<name>SYP_GEOSW</name>
<protein>
    <recommendedName>
        <fullName evidence="1">Proline--tRNA ligase</fullName>
        <ecNumber evidence="1">6.1.1.15</ecNumber>
    </recommendedName>
    <alternativeName>
        <fullName evidence="1">Prolyl-tRNA synthetase</fullName>
        <shortName evidence="1">ProRS</shortName>
    </alternativeName>
</protein>
<proteinExistence type="inferred from homology"/>
<gene>
    <name evidence="1" type="primary">proS</name>
    <name type="ordered locus">GWCH70_1149</name>
</gene>
<evidence type="ECO:0000255" key="1">
    <source>
        <dbReference type="HAMAP-Rule" id="MF_01569"/>
    </source>
</evidence>
<reference key="1">
    <citation type="submission" date="2009-06" db="EMBL/GenBank/DDBJ databases">
        <title>Complete sequence of chromosome of Geopacillus sp. WCH70.</title>
        <authorList>
            <consortium name="US DOE Joint Genome Institute"/>
            <person name="Lucas S."/>
            <person name="Copeland A."/>
            <person name="Lapidus A."/>
            <person name="Glavina del Rio T."/>
            <person name="Dalin E."/>
            <person name="Tice H."/>
            <person name="Bruce D."/>
            <person name="Goodwin L."/>
            <person name="Pitluck S."/>
            <person name="Chertkov O."/>
            <person name="Brettin T."/>
            <person name="Detter J.C."/>
            <person name="Han C."/>
            <person name="Larimer F."/>
            <person name="Land M."/>
            <person name="Hauser L."/>
            <person name="Kyrpides N."/>
            <person name="Mikhailova N."/>
            <person name="Brumm P."/>
            <person name="Mead D.A."/>
            <person name="Richardson P."/>
        </authorList>
    </citation>
    <scope>NUCLEOTIDE SEQUENCE [LARGE SCALE GENOMIC DNA]</scope>
    <source>
        <strain>WCH70</strain>
    </source>
</reference>
<accession>C5D9C3</accession>
<keyword id="KW-0030">Aminoacyl-tRNA synthetase</keyword>
<keyword id="KW-0067">ATP-binding</keyword>
<keyword id="KW-0963">Cytoplasm</keyword>
<keyword id="KW-0436">Ligase</keyword>
<keyword id="KW-0547">Nucleotide-binding</keyword>
<keyword id="KW-0648">Protein biosynthesis</keyword>
<comment type="function">
    <text evidence="1">Catalyzes the attachment of proline to tRNA(Pro) in a two-step reaction: proline is first activated by ATP to form Pro-AMP and then transferred to the acceptor end of tRNA(Pro). As ProRS can inadvertently accommodate and process non-cognate amino acids such as alanine and cysteine, to avoid such errors it has two additional distinct editing activities against alanine. One activity is designated as 'pretransfer' editing and involves the tRNA(Pro)-independent hydrolysis of activated Ala-AMP. The other activity is designated 'posttransfer' editing and involves deacylation of mischarged Ala-tRNA(Pro). The misacylated Cys-tRNA(Pro) is not edited by ProRS.</text>
</comment>
<comment type="catalytic activity">
    <reaction evidence="1">
        <text>tRNA(Pro) + L-proline + ATP = L-prolyl-tRNA(Pro) + AMP + diphosphate</text>
        <dbReference type="Rhea" id="RHEA:14305"/>
        <dbReference type="Rhea" id="RHEA-COMP:9700"/>
        <dbReference type="Rhea" id="RHEA-COMP:9702"/>
        <dbReference type="ChEBI" id="CHEBI:30616"/>
        <dbReference type="ChEBI" id="CHEBI:33019"/>
        <dbReference type="ChEBI" id="CHEBI:60039"/>
        <dbReference type="ChEBI" id="CHEBI:78442"/>
        <dbReference type="ChEBI" id="CHEBI:78532"/>
        <dbReference type="ChEBI" id="CHEBI:456215"/>
        <dbReference type="EC" id="6.1.1.15"/>
    </reaction>
</comment>
<comment type="subunit">
    <text evidence="1">Homodimer.</text>
</comment>
<comment type="subcellular location">
    <subcellularLocation>
        <location evidence="1">Cytoplasm</location>
    </subcellularLocation>
</comment>
<comment type="domain">
    <text evidence="1">Consists of three domains: the N-terminal catalytic domain, the editing domain and the C-terminal anticodon-binding domain.</text>
</comment>
<comment type="similarity">
    <text evidence="1">Belongs to the class-II aminoacyl-tRNA synthetase family. ProS type 1 subfamily.</text>
</comment>